<gene>
    <name type="primary">PEPCK</name>
</gene>
<comment type="catalytic activity">
    <reaction>
        <text>oxaloacetate + ATP = phosphoenolpyruvate + ADP + CO2</text>
        <dbReference type="Rhea" id="RHEA:18617"/>
        <dbReference type="ChEBI" id="CHEBI:16452"/>
        <dbReference type="ChEBI" id="CHEBI:16526"/>
        <dbReference type="ChEBI" id="CHEBI:30616"/>
        <dbReference type="ChEBI" id="CHEBI:58702"/>
        <dbReference type="ChEBI" id="CHEBI:456216"/>
        <dbReference type="EC" id="4.1.1.49"/>
    </reaction>
</comment>
<comment type="pathway">
    <text>Carbohydrate biosynthesis; gluconeogenesis.</text>
</comment>
<comment type="subunit">
    <text evidence="1">Homodimer.</text>
</comment>
<comment type="subcellular location">
    <subcellularLocation>
        <location evidence="1">Glycosome</location>
    </subcellularLocation>
</comment>
<comment type="similarity">
    <text evidence="3">Belongs to the phosphoenolpyruvate carboxykinase (ATP) family.</text>
</comment>
<name>PCKA_TRYCR</name>
<organism>
    <name type="scientific">Trypanosoma cruzi</name>
    <dbReference type="NCBI Taxonomy" id="5693"/>
    <lineage>
        <taxon>Eukaryota</taxon>
        <taxon>Discoba</taxon>
        <taxon>Euglenozoa</taxon>
        <taxon>Kinetoplastea</taxon>
        <taxon>Metakinetoplastina</taxon>
        <taxon>Trypanosomatida</taxon>
        <taxon>Trypanosomatidae</taxon>
        <taxon>Trypanosoma</taxon>
        <taxon>Schizotrypanum</taxon>
    </lineage>
</organism>
<feature type="chain" id="PRO_0000203868" description="Phosphoenolpyruvate carboxykinase (ATP), glycosomal">
    <location>
        <begin position="1"/>
        <end position="472"/>
    </location>
</feature>
<feature type="binding site" evidence="2">
    <location>
        <begin position="221"/>
        <end position="228"/>
    </location>
    <ligand>
        <name>ATP</name>
        <dbReference type="ChEBI" id="CHEBI:30616"/>
    </ligand>
</feature>
<feature type="strand" evidence="4">
    <location>
        <begin position="4"/>
        <end position="8"/>
    </location>
</feature>
<feature type="helix" evidence="4">
    <location>
        <begin position="11"/>
        <end position="21"/>
    </location>
</feature>
<feature type="strand" evidence="4">
    <location>
        <begin position="33"/>
        <end position="35"/>
    </location>
</feature>
<feature type="strand" evidence="4">
    <location>
        <begin position="41"/>
        <end position="43"/>
    </location>
</feature>
<feature type="helix" evidence="4">
    <location>
        <begin position="45"/>
        <end position="47"/>
    </location>
</feature>
<feature type="strand" evidence="4">
    <location>
        <begin position="48"/>
        <end position="51"/>
    </location>
</feature>
<feature type="helix" evidence="4">
    <location>
        <begin position="54"/>
        <end position="57"/>
    </location>
</feature>
<feature type="turn" evidence="4">
    <location>
        <begin position="63"/>
        <end position="65"/>
    </location>
</feature>
<feature type="helix" evidence="4">
    <location>
        <begin position="71"/>
        <end position="86"/>
    </location>
</feature>
<feature type="strand" evidence="4">
    <location>
        <begin position="88"/>
        <end position="98"/>
    </location>
</feature>
<feature type="turn" evidence="4">
    <location>
        <begin position="102"/>
        <end position="104"/>
    </location>
</feature>
<feature type="strand" evidence="4">
    <location>
        <begin position="106"/>
        <end position="114"/>
    </location>
</feature>
<feature type="helix" evidence="4">
    <location>
        <begin position="115"/>
        <end position="124"/>
    </location>
</feature>
<feature type="helix" evidence="4">
    <location>
        <begin position="130"/>
        <end position="134"/>
    </location>
</feature>
<feature type="strand" evidence="4">
    <location>
        <begin position="140"/>
        <end position="146"/>
    </location>
</feature>
<feature type="strand" evidence="4">
    <location>
        <begin position="163"/>
        <end position="167"/>
    </location>
</feature>
<feature type="turn" evidence="4">
    <location>
        <begin position="168"/>
        <end position="171"/>
    </location>
</feature>
<feature type="strand" evidence="4">
    <location>
        <begin position="172"/>
        <end position="177"/>
    </location>
</feature>
<feature type="helix" evidence="4">
    <location>
        <begin position="182"/>
        <end position="198"/>
    </location>
</feature>
<feature type="strand" evidence="4">
    <location>
        <begin position="202"/>
        <end position="210"/>
    </location>
</feature>
<feature type="strand" evidence="4">
    <location>
        <begin position="216"/>
        <end position="220"/>
    </location>
</feature>
<feature type="helix" evidence="4">
    <location>
        <begin position="227"/>
        <end position="231"/>
    </location>
</feature>
<feature type="strand" evidence="4">
    <location>
        <begin position="236"/>
        <end position="242"/>
    </location>
</feature>
<feature type="strand" evidence="4">
    <location>
        <begin position="244"/>
        <end position="246"/>
    </location>
</feature>
<feature type="strand" evidence="4">
    <location>
        <begin position="251"/>
        <end position="254"/>
    </location>
</feature>
<feature type="strand" evidence="4">
    <location>
        <begin position="256"/>
        <end position="261"/>
    </location>
</feature>
<feature type="turn" evidence="4">
    <location>
        <begin position="267"/>
        <end position="269"/>
    </location>
</feature>
<feature type="helix" evidence="4">
    <location>
        <begin position="271"/>
        <end position="275"/>
    </location>
</feature>
<feature type="strand" evidence="4">
    <location>
        <begin position="282"/>
        <end position="285"/>
    </location>
</feature>
<feature type="turn" evidence="4">
    <location>
        <begin position="290"/>
        <end position="292"/>
    </location>
</feature>
<feature type="strand" evidence="4">
    <location>
        <begin position="307"/>
        <end position="311"/>
    </location>
</feature>
<feature type="helix" evidence="4">
    <location>
        <begin position="312"/>
        <end position="314"/>
    </location>
</feature>
<feature type="strand" evidence="4">
    <location>
        <begin position="327"/>
        <end position="334"/>
    </location>
</feature>
<feature type="strand" evidence="4">
    <location>
        <begin position="343"/>
        <end position="347"/>
    </location>
</feature>
<feature type="helix" evidence="4">
    <location>
        <begin position="349"/>
        <end position="358"/>
    </location>
</feature>
<feature type="strand" evidence="4">
    <location>
        <begin position="360"/>
        <end position="363"/>
    </location>
</feature>
<feature type="strand" evidence="4">
    <location>
        <begin position="365"/>
        <end position="368"/>
    </location>
</feature>
<feature type="strand" evidence="4">
    <location>
        <begin position="376"/>
        <end position="379"/>
    </location>
</feature>
<feature type="helix" evidence="4">
    <location>
        <begin position="381"/>
        <end position="383"/>
    </location>
</feature>
<feature type="helix" evidence="4">
    <location>
        <begin position="385"/>
        <end position="387"/>
    </location>
</feature>
<feature type="helix" evidence="4">
    <location>
        <begin position="392"/>
        <end position="406"/>
    </location>
</feature>
<feature type="strand" evidence="4">
    <location>
        <begin position="409"/>
        <end position="414"/>
    </location>
</feature>
<feature type="strand" evidence="4">
    <location>
        <begin position="416"/>
        <end position="420"/>
    </location>
</feature>
<feature type="helix" evidence="4">
    <location>
        <begin position="422"/>
        <end position="424"/>
    </location>
</feature>
<feature type="helix" evidence="4">
    <location>
        <begin position="431"/>
        <end position="442"/>
    </location>
</feature>
<feature type="strand" evidence="4">
    <location>
        <begin position="443"/>
        <end position="445"/>
    </location>
</feature>
<feature type="helix" evidence="4">
    <location>
        <begin position="446"/>
        <end position="448"/>
    </location>
</feature>
<feature type="strand" evidence="4">
    <location>
        <begin position="451"/>
        <end position="454"/>
    </location>
</feature>
<feature type="turn" evidence="4">
    <location>
        <begin position="455"/>
        <end position="457"/>
    </location>
</feature>
<accession>P51058</accession>
<reference key="1">
    <citation type="journal article" date="1993" name="Gene">
        <title>Cloning and characterization of the gene encoding ATP-dependent phospho-enol-pyruvate carboxykinase in Trypanosoma cruzi: comparison of primary and predicted secondary structure with host GTP-dependent enzyme.</title>
        <authorList>
            <person name="Linss J."/>
            <person name="Goldenberg S."/>
            <person name="Urbina J.A."/>
            <person name="Amzel L.M."/>
        </authorList>
    </citation>
    <scope>NUCLEOTIDE SEQUENCE [MRNA]</scope>
</reference>
<protein>
    <recommendedName>
        <fullName>Phosphoenolpyruvate carboxykinase (ATP), glycosomal</fullName>
        <ecNumber>4.1.1.49</ecNumber>
    </recommendedName>
</protein>
<proteinExistence type="evidence at protein level"/>
<dbReference type="EC" id="4.1.1.49"/>
<dbReference type="EMBL" id="M91163">
    <property type="protein sequence ID" value="AAA50780.1"/>
    <property type="molecule type" value="mRNA"/>
</dbReference>
<dbReference type="PDB" id="1II2">
    <property type="method" value="X-ray"/>
    <property type="resolution" value="2.00 A"/>
    <property type="chains" value="A/B=2-457"/>
</dbReference>
<dbReference type="PDBsum" id="1II2"/>
<dbReference type="SMR" id="P51058"/>
<dbReference type="VEuPathDB" id="TriTrypDB:BCY84_02915"/>
<dbReference type="VEuPathDB" id="TriTrypDB:C3747_111g98"/>
<dbReference type="VEuPathDB" id="TriTrypDB:C4B63_9g285"/>
<dbReference type="VEuPathDB" id="TriTrypDB:ECC02_012486"/>
<dbReference type="VEuPathDB" id="TriTrypDB:Tc_MARK_9661"/>
<dbReference type="VEuPathDB" id="TriTrypDB:TcBrA4_0071790"/>
<dbReference type="VEuPathDB" id="TriTrypDB:TcCL_ESM11520"/>
<dbReference type="VEuPathDB" id="TriTrypDB:TcCLB.507547.90"/>
<dbReference type="VEuPathDB" id="TriTrypDB:TcCLB.508441.20"/>
<dbReference type="VEuPathDB" id="TriTrypDB:TCDM_05454"/>
<dbReference type="VEuPathDB" id="TriTrypDB:TcG_04606"/>
<dbReference type="VEuPathDB" id="TriTrypDB:TCSYLVIO_007781"/>
<dbReference type="VEuPathDB" id="TriTrypDB:TcYC6_0076530"/>
<dbReference type="BRENDA" id="4.1.1.49">
    <property type="organism ID" value="6524"/>
</dbReference>
<dbReference type="SABIO-RK" id="P51058"/>
<dbReference type="UniPathway" id="UPA00138"/>
<dbReference type="EvolutionaryTrace" id="P51058"/>
<dbReference type="GO" id="GO:0005829">
    <property type="term" value="C:cytosol"/>
    <property type="evidence" value="ECO:0007669"/>
    <property type="project" value="TreeGrafter"/>
</dbReference>
<dbReference type="GO" id="GO:0020015">
    <property type="term" value="C:glycosome"/>
    <property type="evidence" value="ECO:0007669"/>
    <property type="project" value="UniProtKB-SubCell"/>
</dbReference>
<dbReference type="GO" id="GO:0005524">
    <property type="term" value="F:ATP binding"/>
    <property type="evidence" value="ECO:0007669"/>
    <property type="project" value="UniProtKB-KW"/>
</dbReference>
<dbReference type="GO" id="GO:0004612">
    <property type="term" value="F:phosphoenolpyruvate carboxykinase (ATP) activity"/>
    <property type="evidence" value="ECO:0007669"/>
    <property type="project" value="UniProtKB-EC"/>
</dbReference>
<dbReference type="GO" id="GO:0006094">
    <property type="term" value="P:gluconeogenesis"/>
    <property type="evidence" value="ECO:0007669"/>
    <property type="project" value="UniProtKB-UniPathway"/>
</dbReference>
<dbReference type="Gene3D" id="3.90.228.20">
    <property type="match status" value="1"/>
</dbReference>
<dbReference type="Gene3D" id="3.40.449.10">
    <property type="entry name" value="Phosphoenolpyruvate Carboxykinase, domain 1"/>
    <property type="match status" value="1"/>
</dbReference>
<dbReference type="Gene3D" id="2.170.8.10">
    <property type="entry name" value="Phosphoenolpyruvate Carboxykinase, domain 2"/>
    <property type="match status" value="1"/>
</dbReference>
<dbReference type="HAMAP" id="MF_00453">
    <property type="entry name" value="PEPCK_ATP"/>
    <property type="match status" value="1"/>
</dbReference>
<dbReference type="InterPro" id="IPR001272">
    <property type="entry name" value="PEP_carboxykinase_ATP"/>
</dbReference>
<dbReference type="InterPro" id="IPR013035">
    <property type="entry name" value="PEP_carboxykinase_C"/>
</dbReference>
<dbReference type="InterPro" id="IPR008210">
    <property type="entry name" value="PEP_carboxykinase_N"/>
</dbReference>
<dbReference type="InterPro" id="IPR015994">
    <property type="entry name" value="PEPCK_ATP_CS"/>
</dbReference>
<dbReference type="PANTHER" id="PTHR30031:SF0">
    <property type="entry name" value="PHOSPHOENOLPYRUVATE CARBOXYKINASE (ATP)"/>
    <property type="match status" value="1"/>
</dbReference>
<dbReference type="PANTHER" id="PTHR30031">
    <property type="entry name" value="PHOSPHOENOLPYRUVATE CARBOXYKINASE ATP"/>
    <property type="match status" value="1"/>
</dbReference>
<dbReference type="Pfam" id="PF01293">
    <property type="entry name" value="PEPCK_ATP"/>
    <property type="match status" value="1"/>
</dbReference>
<dbReference type="PIRSF" id="PIRSF006294">
    <property type="entry name" value="PEP_crbxkin"/>
    <property type="match status" value="1"/>
</dbReference>
<dbReference type="SUPFAM" id="SSF68923">
    <property type="entry name" value="PEP carboxykinase N-terminal domain"/>
    <property type="match status" value="1"/>
</dbReference>
<dbReference type="SUPFAM" id="SSF53795">
    <property type="entry name" value="PEP carboxykinase-like"/>
    <property type="match status" value="1"/>
</dbReference>
<dbReference type="PROSITE" id="PS00532">
    <property type="entry name" value="PEPCK_ATP"/>
    <property type="match status" value="1"/>
</dbReference>
<sequence>MPPTIHRNLLSPELVQWALKIEKDSRLTARGALAVMSYAKTGRSPLDKRIVDTDDVRENVDWGKVNMKLSEESFARVRKIAKEFLDTREHLFVVDCFAGHDERYRLKVRVFTTRPYHALFMRDMLIVPTPEELATFGEPDYVIYNAGECKADPSIPGLTSTTCVALNFKTREQVILGTEYAGEMKKGILTVMFELMPQMNHLCMHASANVGKQGDVTVFFGLSGTGKTTLSADPHRNLIGDDEHVWTDRGVFNIEGGCYAKAIGLNPKTEKDIYDAVRFGAVAENCVLDKRTGEIDFYDESICKNTRVAYPLSHIEGALSKAIAGHPKNVIFLTNDAFGVMPPVARLTSAQAMFWFVMGYTANVPGVEAGGTRTARPIFSSCFGGPFLVRHATFYGEQLAEKMQKHNSRVWLLNTGYAGGRADRGAKRMPLRVTRAIIDAIHDGTLDRTEYEEYPGWACTSRSTSPKCRSIC</sequence>
<keyword id="KW-0002">3D-structure</keyword>
<keyword id="KW-0067">ATP-binding</keyword>
<keyword id="KW-0210">Decarboxylase</keyword>
<keyword id="KW-0312">Gluconeogenesis</keyword>
<keyword id="KW-0327">Glycosome</keyword>
<keyword id="KW-0456">Lyase</keyword>
<keyword id="KW-0547">Nucleotide-binding</keyword>
<keyword id="KW-0576">Peroxisome</keyword>
<evidence type="ECO:0000250" key="1"/>
<evidence type="ECO:0000255" key="2"/>
<evidence type="ECO:0000305" key="3"/>
<evidence type="ECO:0007829" key="4">
    <source>
        <dbReference type="PDB" id="1II2"/>
    </source>
</evidence>